<proteinExistence type="inferred from homology"/>
<organismHost>
    <name type="scientific">Aves</name>
    <dbReference type="NCBI Taxonomy" id="8782"/>
</organismHost>
<organism>
    <name type="scientific">Influenza A virus (strain A/Anas acuta/Primorje/695/1976 H2N3)</name>
    <dbReference type="NCBI Taxonomy" id="383602"/>
    <lineage>
        <taxon>Viruses</taxon>
        <taxon>Riboviria</taxon>
        <taxon>Orthornavirae</taxon>
        <taxon>Negarnaviricota</taxon>
        <taxon>Polyploviricotina</taxon>
        <taxon>Insthoviricetes</taxon>
        <taxon>Articulavirales</taxon>
        <taxon>Orthomyxoviridae</taxon>
        <taxon>Alphainfluenzavirus</taxon>
        <taxon>Alphainfluenzavirus influenzae</taxon>
        <taxon>Influenza A virus</taxon>
    </lineage>
</organism>
<feature type="chain" id="PRO_0000078917" description="Non-structural protein 1">
    <location>
        <begin position="1"/>
        <end position="230"/>
    </location>
</feature>
<feature type="region of interest" description="RNA-binding and homodimerization" evidence="1">
    <location>
        <begin position="1"/>
        <end position="73"/>
    </location>
</feature>
<feature type="region of interest" description="CPSF4-binding" evidence="1">
    <location>
        <begin position="180"/>
        <end position="215"/>
    </location>
</feature>
<feature type="region of interest" description="Disordered" evidence="2">
    <location>
        <begin position="205"/>
        <end position="230"/>
    </location>
</feature>
<feature type="region of interest" description="PABPN1-binding" evidence="1">
    <location>
        <begin position="223"/>
        <end position="230"/>
    </location>
</feature>
<feature type="short sequence motif" description="Nuclear localization signal" evidence="1">
    <location>
        <begin position="34"/>
        <end position="38"/>
    </location>
</feature>
<feature type="short sequence motif" description="Nuclear export signal" evidence="1">
    <location>
        <begin position="137"/>
        <end position="146"/>
    </location>
</feature>
<gene>
    <name evidence="1" type="primary">NS</name>
</gene>
<accession>P69252</accession>
<accession>P13138</accession>
<sequence>MDSNTVSSFQVDCFLWHVRKRFADQELGDAPFLDRLRRDQKSLRGRGSTLGLDIETATRAGKQIVERILEEESDEALKMTIASVPASRYLTDMTLEEMSRDWFMLMPKQKVAGSLCIRMDQAIMDKNIILKANFSVIFDRLETLILLRAFTEEGAIVGEISPLPSLPGHTDEDVKNAIGVLIGGLEWNDNTVRVSETLQRFAWRSSNEDGRPPLPPKQKRKMARTIESEV</sequence>
<evidence type="ECO:0000255" key="1">
    <source>
        <dbReference type="HAMAP-Rule" id="MF_04066"/>
    </source>
</evidence>
<evidence type="ECO:0000256" key="2">
    <source>
        <dbReference type="SAM" id="MobiDB-lite"/>
    </source>
</evidence>
<keyword id="KW-0025">Alternative splicing</keyword>
<keyword id="KW-1262">Eukaryotic host gene expression shutoff by virus</keyword>
<keyword id="KW-1035">Host cytoplasm</keyword>
<keyword id="KW-1190">Host gene expression shutoff by virus</keyword>
<keyword id="KW-1192">Host mRNA suppression by virus</keyword>
<keyword id="KW-1048">Host nucleus</keyword>
<keyword id="KW-0945">Host-virus interaction</keyword>
<keyword id="KW-1090">Inhibition of host innate immune response by virus</keyword>
<keyword id="KW-1114">Inhibition of host interferon signaling pathway by virus</keyword>
<keyword id="KW-1102">Inhibition of host PKR by virus</keyword>
<keyword id="KW-1103">Inhibition of host pre-mRNA processing by virus</keyword>
<keyword id="KW-1088">Inhibition of host RIG-I by virus</keyword>
<keyword id="KW-1113">Inhibition of host RLR pathway by virus</keyword>
<keyword id="KW-0922">Interferon antiviral system evasion</keyword>
<keyword id="KW-0694">RNA-binding</keyword>
<keyword id="KW-0832">Ubl conjugation</keyword>
<keyword id="KW-0899">Viral immunoevasion</keyword>
<dbReference type="EMBL" id="M60800">
    <property type="protein sequence ID" value="AAA43130.1"/>
    <property type="molecule type" value="Genomic_RNA"/>
</dbReference>
<dbReference type="SMR" id="P69252"/>
<dbReference type="GO" id="GO:0030430">
    <property type="term" value="C:host cell cytoplasm"/>
    <property type="evidence" value="ECO:0007669"/>
    <property type="project" value="UniProtKB-SubCell"/>
</dbReference>
<dbReference type="GO" id="GO:0042025">
    <property type="term" value="C:host cell nucleus"/>
    <property type="evidence" value="ECO:0007669"/>
    <property type="project" value="UniProtKB-SubCell"/>
</dbReference>
<dbReference type="GO" id="GO:0030291">
    <property type="term" value="F:protein serine/threonine kinase inhibitor activity"/>
    <property type="evidence" value="ECO:0007669"/>
    <property type="project" value="UniProtKB-KW"/>
</dbReference>
<dbReference type="GO" id="GO:0003723">
    <property type="term" value="F:RNA binding"/>
    <property type="evidence" value="ECO:0007669"/>
    <property type="project" value="UniProtKB-KW"/>
</dbReference>
<dbReference type="GO" id="GO:0039540">
    <property type="term" value="P:symbiont-mediated suppression of host cytoplasmic pattern recognition receptor signaling pathway via inhibition of RIG-I activity"/>
    <property type="evidence" value="ECO:0007669"/>
    <property type="project" value="UniProtKB-KW"/>
</dbReference>
<dbReference type="GO" id="GO:0039657">
    <property type="term" value="P:symbiont-mediated suppression of host gene expression"/>
    <property type="evidence" value="ECO:0007669"/>
    <property type="project" value="UniProtKB-KW"/>
</dbReference>
<dbReference type="GO" id="GO:0039524">
    <property type="term" value="P:symbiont-mediated suppression of host mRNA processing"/>
    <property type="evidence" value="ECO:0007669"/>
    <property type="project" value="UniProtKB-KW"/>
</dbReference>
<dbReference type="GO" id="GO:0039580">
    <property type="term" value="P:symbiont-mediated suppression of host PKR/eIFalpha signaling"/>
    <property type="evidence" value="ECO:0007669"/>
    <property type="project" value="UniProtKB-KW"/>
</dbReference>
<dbReference type="GO" id="GO:0039502">
    <property type="term" value="P:symbiont-mediated suppression of host type I interferon-mediated signaling pathway"/>
    <property type="evidence" value="ECO:0007669"/>
    <property type="project" value="UniProtKB-KW"/>
</dbReference>
<dbReference type="FunFam" id="1.10.287.10:FF:000001">
    <property type="entry name" value="Non-structural protein 1"/>
    <property type="match status" value="1"/>
</dbReference>
<dbReference type="FunFam" id="3.30.420.330:FF:000001">
    <property type="entry name" value="Non-structural protein 1"/>
    <property type="match status" value="1"/>
</dbReference>
<dbReference type="Gene3D" id="3.30.420.330">
    <property type="entry name" value="Influenza virus non-structural protein, effector domain"/>
    <property type="match status" value="1"/>
</dbReference>
<dbReference type="Gene3D" id="1.10.287.10">
    <property type="entry name" value="S15/NS1, RNA-binding"/>
    <property type="match status" value="1"/>
</dbReference>
<dbReference type="HAMAP" id="MF_04066">
    <property type="entry name" value="INFV_NS1"/>
    <property type="match status" value="1"/>
</dbReference>
<dbReference type="InterPro" id="IPR004208">
    <property type="entry name" value="NS1"/>
</dbReference>
<dbReference type="InterPro" id="IPR000256">
    <property type="entry name" value="NS1A"/>
</dbReference>
<dbReference type="InterPro" id="IPR038064">
    <property type="entry name" value="NS1A_effect_dom-like_sf"/>
</dbReference>
<dbReference type="InterPro" id="IPR009068">
    <property type="entry name" value="uS15_NS1_RNA-bd_sf"/>
</dbReference>
<dbReference type="Pfam" id="PF00600">
    <property type="entry name" value="Flu_NS1"/>
    <property type="match status" value="1"/>
</dbReference>
<dbReference type="SUPFAM" id="SSF143021">
    <property type="entry name" value="Ns1 effector domain-like"/>
    <property type="match status" value="1"/>
</dbReference>
<dbReference type="SUPFAM" id="SSF47060">
    <property type="entry name" value="S15/NS1 RNA-binding domain"/>
    <property type="match status" value="1"/>
</dbReference>
<comment type="function">
    <text evidence="1">Inhibits post-transcriptional processing of cellular pre-mRNA, by binding and inhibiting two cellular proteins that are required for the 3'-end processing of cellular pre-mRNAs: the 30 kDa cleavage and polyadenylation specificity factor/CPSF4 and the poly(A)-binding protein 2/PABPN1. In turn, unprocessed 3' end pre-mRNAs accumulate in the host nucleus and are no longer exported to the cytoplasm. Cellular protein synthesis is thereby shut off very early after virus infection. Viral protein synthesis is not affected by the inhibition of the cellular 3' end processing machinery because the poly(A) tails of viral mRNAs are produced by the viral polymerase through a stuttering mechanism. Prevents the establishment of the cellular antiviral state by inhibiting TRIM25-mediated RIGI ubiquitination, which normally triggers the antiviral transduction signal that leads to the activation of type I IFN genes by transcription factors IRF3 and IRF7. Also binds poly(A) and U6 snRNA. Inhibits the integrated stress response (ISR) in the infected cell by blocking dsRNA binding by EIF2AK2/PKR and further phosphorylation of EIF2S1/EIF-2ALPHA. Stress granule formation is thus inhibited, which allows protein synthesis and viral replication.</text>
</comment>
<comment type="subunit">
    <text evidence="1">Homodimer. Interacts with host TRIM25 (via coiled coil); this interaction specifically inhibits TRIM25 multimerization and TRIM25-mediated RIGI CARD ubiquitination. Interacts with human EIF2AK2/PKR, CPSF4, IVNS1ABP and PABPN1.</text>
</comment>
<comment type="subcellular location">
    <subcellularLocation>
        <location evidence="1">Host nucleus</location>
    </subcellularLocation>
    <subcellularLocation>
        <location evidence="1">Host cytoplasm</location>
    </subcellularLocation>
    <text evidence="1">In uninfected, transfected cells, NS1 is localized in the nucleus. Only in virus infected cells, the nuclear export signal is unveiled, presumably by a viral protein, and a fraction of NS1 is exported in the cytoplasm.</text>
</comment>
<comment type="alternative products">
    <event type="alternative splicing"/>
    <isoform>
        <id>P69252-1</id>
        <name>NS1</name>
        <sequence type="displayed"/>
    </isoform>
    <isoform>
        <id>P30913-1</id>
        <name>NEP</name>
        <name>NS2</name>
        <sequence type="external"/>
    </isoform>
</comment>
<comment type="domain">
    <text evidence="1">The dsRNA-binding region is required for suppression of RNA silencing.</text>
</comment>
<comment type="PTM">
    <text evidence="1">Upon interferon induction, ISGylated via host HERC5; this results in the impairment of NS1 interaction with RNA targets due to its inability to form homodimers and to interact with host EIF2AK2/PKR.</text>
</comment>
<comment type="similarity">
    <text evidence="1">Belongs to the influenza A viruses NS1 family.</text>
</comment>
<name>NS1_I76A0</name>
<protein>
    <recommendedName>
        <fullName evidence="1">Non-structural protein 1</fullName>
        <shortName evidence="1">NS1</shortName>
    </recommendedName>
    <alternativeName>
        <fullName evidence="1">NS1A</fullName>
    </alternativeName>
</protein>
<reference key="1">
    <citation type="journal article" date="1991" name="Virology">
        <title>Phylogenetic relationship of the nonstructural (NS) genes of influenza A viruses.</title>
        <authorList>
            <person name="Ludwig S."/>
            <person name="Schultz U."/>
            <person name="Mandler J."/>
            <person name="Fitch W.M."/>
            <person name="Scholtissek C."/>
        </authorList>
    </citation>
    <scope>NUCLEOTIDE SEQUENCE [GENOMIC RNA]</scope>
</reference>
<reference key="2">
    <citation type="journal article" date="2003" name="Virology">
        <title>Intracellular warfare between human influenza viruses and human cells: the roles of the viral NS1 protein.</title>
        <authorList>
            <person name="Krug R.M."/>
            <person name="Yuan W."/>
            <person name="Noah D.L."/>
            <person name="Latham A.G."/>
        </authorList>
    </citation>
    <scope>REVIEW</scope>
</reference>